<sequence>MNSEEMNHVNPFEISDNNDVSIPSQRYPFANDPADSVFCADDFLQSYGEFNMDNFGESEPFIDASGAINAAIGVTGTVLGFLGVPFAGALTTFYQKLFGFLFPNNNTKQWEEFMKQVEALIDEKISDAVRNKAISELQGLVNNITLYTEALEEWLENKENPAVRDRVLQRWRILDGFFEQQMPSFAVKGFEVLLLVVYTQAANLHLLSLRDAYIYGAEWGLTPTNIDQNHTRLLRHSAEYTDHCVNWYNTGLKQLENSDAKSWFQYNRFRREMTLSVLDVIALFPAYDVKMYPIPTNFQLTREVYTDVIGKIGRNDSDHWYSANAPSFSNLESTLIRTPHVVDYIKKLKIFYATVDYYGIYGRSGKWVGHIITSATSANTTETRNYGTIVNHDSVELNFEGKNIYKTGSLPQGVPPYQIGYVTPIYFITRAVNFFTVSGSKTSVEKYYSKKDRYYSEGLPEEQGVFSTEQLPPNSIAEPEHIAYSHRLCHVTFISVSNGNKYSKDLPLFSWTHSSVDFDNYVYPTKITQLPATKGYNVSIVKEPGFIGGDIGKNNGQILGKYKVNVEDVSQKYRFRVRYATETEGELGIKIDGRTVNLYQYKKTKAPGDPLTYKAFDYLSFSTPVKFNNASSTIELFLQNKTSGTFYLAGIEIIPVKSNYEEELTLEEAKKAVSSLFTDARNALKIDVTDYQIDQAANLVECISGDLYAKEKIVLLRAVKFAKQLSQSQNLLSDPEFNNVNRENSWTASTSVAIIEGDPLYKGRAVQLSSARDENFPTYLYQKIDESTLKPYTRYQLRGFVEGSENLDVYLIRYGAAHVRMNVPYNLEIIDTSSPVNPCEEVDGLSHRSCNVFDRCKQSISVAPDANTGPDQIDGDPHAFSFHIDTGTVDSTENLGIWVAFKISELDGSAIFGNLELIEVGPLSGEALAQVQRKEEKWKQVLAKKRETTAQTVCSGEASQLTNSSQILKIRNYDLIQNFRIFSLRNTLSIKFKIYTITNYPYSRLNYDLFMELENRIQNASLYMTSNILQNGGFKSDVTSWETTANAEVQQIDGASVLVLSNWNASVAQSVNVQNDHGYVLRVTAKKEGIGNGYVTILDCANHIDTLTFSACRSDSDTSSNELTAYVTKTLEIFPDTEQIRIEIGETEGMFYVESVELIRMEN</sequence>
<dbReference type="EMBL" id="AF122897">
    <property type="protein sequence ID" value="AAD25075.1"/>
    <property type="molecule type" value="Genomic_DNA"/>
</dbReference>
<dbReference type="SMR" id="Q9X597"/>
<dbReference type="GO" id="GO:0005102">
    <property type="term" value="F:signaling receptor binding"/>
    <property type="evidence" value="ECO:0007669"/>
    <property type="project" value="InterPro"/>
</dbReference>
<dbReference type="GO" id="GO:0090729">
    <property type="term" value="F:toxin activity"/>
    <property type="evidence" value="ECO:0007669"/>
    <property type="project" value="UniProtKB-KW"/>
</dbReference>
<dbReference type="GO" id="GO:0030435">
    <property type="term" value="P:sporulation resulting in formation of a cellular spore"/>
    <property type="evidence" value="ECO:0007669"/>
    <property type="project" value="UniProtKB-KW"/>
</dbReference>
<dbReference type="GO" id="GO:0001907">
    <property type="term" value="P:symbiont-mediated killing of host cell"/>
    <property type="evidence" value="ECO:0007669"/>
    <property type="project" value="InterPro"/>
</dbReference>
<dbReference type="CDD" id="cd04085">
    <property type="entry name" value="delta_endotoxin_C"/>
    <property type="match status" value="1"/>
</dbReference>
<dbReference type="Gene3D" id="2.60.120.260">
    <property type="entry name" value="Galactose-binding domain-like"/>
    <property type="match status" value="2"/>
</dbReference>
<dbReference type="Gene3D" id="2.100.10.10">
    <property type="entry name" value="Pesticidal crystal protein, central domain"/>
    <property type="match status" value="1"/>
</dbReference>
<dbReference type="Gene3D" id="1.20.190.10">
    <property type="entry name" value="Pesticidal crystal protein, N-terminal domain"/>
    <property type="match status" value="1"/>
</dbReference>
<dbReference type="InterPro" id="IPR048645">
    <property type="entry name" value="Cry1Ac-like_dom-VII"/>
</dbReference>
<dbReference type="InterPro" id="IPR041587">
    <property type="entry name" value="Cry_V"/>
</dbReference>
<dbReference type="InterPro" id="IPR008979">
    <property type="entry name" value="Galactose-bd-like_sf"/>
</dbReference>
<dbReference type="InterPro" id="IPR038979">
    <property type="entry name" value="Pest_crys"/>
</dbReference>
<dbReference type="InterPro" id="IPR005638">
    <property type="entry name" value="Pest_crys_dom-III"/>
</dbReference>
<dbReference type="InterPro" id="IPR005639">
    <property type="entry name" value="Pest_crys_dom_I"/>
</dbReference>
<dbReference type="InterPro" id="IPR036716">
    <property type="entry name" value="Pest_crys_N_sf"/>
</dbReference>
<dbReference type="InterPro" id="IPR036399">
    <property type="entry name" value="Pest_cryst_cen_dom_sf"/>
</dbReference>
<dbReference type="InterPro" id="IPR001178">
    <property type="entry name" value="Pest_cryst_dom_II"/>
</dbReference>
<dbReference type="PANTHER" id="PTHR37003">
    <property type="entry name" value="ENDOTOXIN_N DOMAIN-CONTAINING PROTEIN-RELATED"/>
    <property type="match status" value="1"/>
</dbReference>
<dbReference type="PANTHER" id="PTHR37003:SF2">
    <property type="entry name" value="PESTICIDAL CRYSTAL PROTEIN N-TERMINAL DOMAIN-CONTAINING PROTEIN"/>
    <property type="match status" value="1"/>
</dbReference>
<dbReference type="Pfam" id="PF17997">
    <property type="entry name" value="Cry1Ac_D5"/>
    <property type="match status" value="1"/>
</dbReference>
<dbReference type="Pfam" id="PF21463">
    <property type="entry name" value="Cry1Ac_dom-VII"/>
    <property type="match status" value="1"/>
</dbReference>
<dbReference type="Pfam" id="PF03944">
    <property type="entry name" value="Endotoxin_C"/>
    <property type="match status" value="1"/>
</dbReference>
<dbReference type="Pfam" id="PF00555">
    <property type="entry name" value="Endotoxin_M"/>
    <property type="match status" value="1"/>
</dbReference>
<dbReference type="Pfam" id="PF03945">
    <property type="entry name" value="Endotoxin_N"/>
    <property type="match status" value="1"/>
</dbReference>
<dbReference type="SUPFAM" id="SSF51096">
    <property type="entry name" value="delta-Endotoxin (insectocide), middle domain"/>
    <property type="match status" value="1"/>
</dbReference>
<dbReference type="SUPFAM" id="SSF56849">
    <property type="entry name" value="delta-Endotoxin (insectocide), N-terminal domain"/>
    <property type="match status" value="1"/>
</dbReference>
<dbReference type="SUPFAM" id="SSF49785">
    <property type="entry name" value="Galactose-binding domain-like"/>
    <property type="match status" value="2"/>
</dbReference>
<accession>Q9X597</accession>
<proteinExistence type="evidence at protein level"/>
<name>C26AA_BACTF</name>
<evidence type="ECO:0000305" key="1"/>
<keyword id="KW-0903">Direct protein sequencing</keyword>
<keyword id="KW-0749">Sporulation</keyword>
<keyword id="KW-0800">Toxin</keyword>
<keyword id="KW-0843">Virulence</keyword>
<gene>
    <name type="primary">cry26Aa</name>
    <name type="synonym">cry26Aa1</name>
    <name type="synonym">cryXXVIA(a)</name>
</gene>
<protein>
    <recommendedName>
        <fullName>Pesticidal crystal protein Cry26Aa</fullName>
    </recommendedName>
    <alternativeName>
        <fullName>131 kDa crystal protein</fullName>
    </alternativeName>
    <alternativeName>
        <fullName>Crystaline entomocidal protoxin</fullName>
    </alternativeName>
    <alternativeName>
        <fullName>Insecticidal delta-endotoxin CryXXVIA(a)</fullName>
    </alternativeName>
</protein>
<organism>
    <name type="scientific">Bacillus thuringiensis subsp. finitimus</name>
    <dbReference type="NCBI Taxonomy" id="29337"/>
    <lineage>
        <taxon>Bacteria</taxon>
        <taxon>Bacillati</taxon>
        <taxon>Bacillota</taxon>
        <taxon>Bacilli</taxon>
        <taxon>Bacillales</taxon>
        <taxon>Bacillaceae</taxon>
        <taxon>Bacillus</taxon>
        <taxon>Bacillus cereus group</taxon>
    </lineage>
</organism>
<reference key="1">
    <citation type="journal article" date="1999" name="FEBS Lett.">
        <title>Two novel delta-endotoxin gene families cry26 and cry28 from Bacillus thuringiensis ssp. finitimus.</title>
        <authorList>
            <person name="Wojciechowska J.A."/>
            <person name="Lewitin E."/>
            <person name="Revina L.P."/>
            <person name="Zalunin I.A."/>
            <person name="Chestukhina G.G."/>
        </authorList>
    </citation>
    <scope>NUCLEOTIDE SEQUENCE [GENOMIC DNA]</scope>
    <scope>PARTIAL PROTEIN SEQUENCE</scope>
    <source>
        <strain>VKPM B-1166</strain>
    </source>
</reference>
<comment type="function">
    <text>Promotes colloidosmotic lysis by binding to the midgut epithelial cells of insects.</text>
</comment>
<comment type="developmental stage">
    <text>The crystal protein is produced during sporulation and is accumulated both as an inclusion and as part of the spore coat.</text>
</comment>
<comment type="miscellaneous">
    <text>Toxic segment of the protein is located in the N-terminus.</text>
</comment>
<comment type="similarity">
    <text evidence="1">Belongs to the delta endotoxin family.</text>
</comment>
<feature type="chain" id="PRO_0000174101" description="Pesticidal crystal protein Cry26Aa">
    <location>
        <begin position="1"/>
        <end position="1163"/>
    </location>
</feature>